<organism>
    <name type="scientific">Danio rerio</name>
    <name type="common">Zebrafish</name>
    <name type="synonym">Brachydanio rerio</name>
    <dbReference type="NCBI Taxonomy" id="7955"/>
    <lineage>
        <taxon>Eukaryota</taxon>
        <taxon>Metazoa</taxon>
        <taxon>Chordata</taxon>
        <taxon>Craniata</taxon>
        <taxon>Vertebrata</taxon>
        <taxon>Euteleostomi</taxon>
        <taxon>Actinopterygii</taxon>
        <taxon>Neopterygii</taxon>
        <taxon>Teleostei</taxon>
        <taxon>Ostariophysi</taxon>
        <taxon>Cypriniformes</taxon>
        <taxon>Danionidae</taxon>
        <taxon>Danioninae</taxon>
        <taxon>Danio</taxon>
    </lineage>
</organism>
<sequence>MEQRKTQVSSHPFSVESLISSHKTNKDFERRREDVSSQFAQTEIRDSCGSAGIPKHFMLQTSPVKSESPEPDDCTSWVMNSRYSQTRQESPCPLRKHKTNRKPRTPFTTSQLLALERKFRQKQYLSIAERAEFSSSLTLTETQVKIWFQNRRAKAKRLQEAELEKLKLTAKPALHPNFSLPLPLGTQLHSAVSLYGQSYPYQRPLLPVAPVGLYGTPLGYSMYHLA</sequence>
<accession>Q01704</accession>
<proteinExistence type="inferred from homology"/>
<evidence type="ECO:0000255" key="1">
    <source>
        <dbReference type="PROSITE-ProRule" id="PRU00108"/>
    </source>
</evidence>
<evidence type="ECO:0000256" key="2">
    <source>
        <dbReference type="SAM" id="MobiDB-lite"/>
    </source>
</evidence>
<evidence type="ECO:0000305" key="3"/>
<keyword id="KW-0217">Developmental protein</keyword>
<keyword id="KW-0238">DNA-binding</keyword>
<keyword id="KW-0371">Homeobox</keyword>
<keyword id="KW-0539">Nucleus</keyword>
<keyword id="KW-1185">Reference proteome</keyword>
<feature type="chain" id="PRO_0000049069" description="Homeobox protein MSH-D">
    <location>
        <begin position="1"/>
        <end position="226"/>
    </location>
</feature>
<feature type="DNA-binding region" description="Homeobox" evidence="1">
    <location>
        <begin position="100"/>
        <end position="159"/>
    </location>
</feature>
<feature type="region of interest" description="Disordered" evidence="2">
    <location>
        <begin position="1"/>
        <end position="45"/>
    </location>
</feature>
<feature type="region of interest" description="Disordered" evidence="2">
    <location>
        <begin position="85"/>
        <end position="105"/>
    </location>
</feature>
<feature type="compositionally biased region" description="Polar residues" evidence="2">
    <location>
        <begin position="1"/>
        <end position="22"/>
    </location>
</feature>
<feature type="compositionally biased region" description="Basic and acidic residues" evidence="2">
    <location>
        <begin position="24"/>
        <end position="35"/>
    </location>
</feature>
<feature type="compositionally biased region" description="Basic residues" evidence="2">
    <location>
        <begin position="94"/>
        <end position="104"/>
    </location>
</feature>
<name>MSXD_DANRE</name>
<gene>
    <name type="primary">msxd</name>
    <name type="synonym">msh-d</name>
</gene>
<dbReference type="EMBL" id="X65062">
    <property type="protein sequence ID" value="CAA46195.1"/>
    <property type="molecule type" value="Genomic_DNA"/>
</dbReference>
<dbReference type="PIR" id="S23280">
    <property type="entry name" value="S23280"/>
</dbReference>
<dbReference type="SMR" id="Q01704"/>
<dbReference type="FunCoup" id="Q01704">
    <property type="interactions" value="378"/>
</dbReference>
<dbReference type="STRING" id="7955.ENSDARP00000140454"/>
<dbReference type="PaxDb" id="7955-ENSDARP00000110660"/>
<dbReference type="Ensembl" id="ENSDART00000192730">
    <property type="protein sequence ID" value="ENSDARP00000157516"/>
    <property type="gene ID" value="ENSDARG00000101023"/>
</dbReference>
<dbReference type="AGR" id="ZFIN:ZDB-GENE-980526-492"/>
<dbReference type="ZFIN" id="ZDB-GENE-980526-492">
    <property type="gene designation" value="msx2b"/>
</dbReference>
<dbReference type="eggNOG" id="KOG0492">
    <property type="taxonomic scope" value="Eukaryota"/>
</dbReference>
<dbReference type="InParanoid" id="Q01704"/>
<dbReference type="OMA" id="ACQLRKH"/>
<dbReference type="PhylomeDB" id="Q01704"/>
<dbReference type="PRO" id="PR:Q01704"/>
<dbReference type="Proteomes" id="UP000000437">
    <property type="component" value="Unplaced"/>
</dbReference>
<dbReference type="Bgee" id="ENSDARG00000101023">
    <property type="expression patterns" value="Expressed in pharyngeal gill and 26 other cell types or tissues"/>
</dbReference>
<dbReference type="ExpressionAtlas" id="Q01704">
    <property type="expression patterns" value="baseline and differential"/>
</dbReference>
<dbReference type="GO" id="GO:0005634">
    <property type="term" value="C:nucleus"/>
    <property type="evidence" value="ECO:0000318"/>
    <property type="project" value="GO_Central"/>
</dbReference>
<dbReference type="GO" id="GO:0000981">
    <property type="term" value="F:DNA-binding transcription factor activity, RNA polymerase II-specific"/>
    <property type="evidence" value="ECO:0000318"/>
    <property type="project" value="GO_Central"/>
</dbReference>
<dbReference type="GO" id="GO:0000977">
    <property type="term" value="F:RNA polymerase II transcription regulatory region sequence-specific DNA binding"/>
    <property type="evidence" value="ECO:0000318"/>
    <property type="project" value="GO_Central"/>
</dbReference>
<dbReference type="GO" id="GO:0048598">
    <property type="term" value="P:embryonic morphogenesis"/>
    <property type="evidence" value="ECO:0000318"/>
    <property type="project" value="GO_Central"/>
</dbReference>
<dbReference type="GO" id="GO:0006357">
    <property type="term" value="P:regulation of transcription by RNA polymerase II"/>
    <property type="evidence" value="ECO:0000318"/>
    <property type="project" value="GO_Central"/>
</dbReference>
<dbReference type="CDD" id="cd00086">
    <property type="entry name" value="homeodomain"/>
    <property type="match status" value="1"/>
</dbReference>
<dbReference type="FunFam" id="1.10.10.60:FF:000134">
    <property type="entry name" value="Homeobox protein MSX-1"/>
    <property type="match status" value="1"/>
</dbReference>
<dbReference type="Gene3D" id="1.10.10.60">
    <property type="entry name" value="Homeodomain-like"/>
    <property type="match status" value="1"/>
</dbReference>
<dbReference type="InterPro" id="IPR001356">
    <property type="entry name" value="HD"/>
</dbReference>
<dbReference type="InterPro" id="IPR020479">
    <property type="entry name" value="HD_metazoa"/>
</dbReference>
<dbReference type="InterPro" id="IPR017970">
    <property type="entry name" value="Homeobox_CS"/>
</dbReference>
<dbReference type="InterPro" id="IPR009057">
    <property type="entry name" value="Homeodomain-like_sf"/>
</dbReference>
<dbReference type="InterPro" id="IPR050674">
    <property type="entry name" value="Msh_Homeobox_Regulators"/>
</dbReference>
<dbReference type="PANTHER" id="PTHR24338">
    <property type="entry name" value="HOMEOBOX PROTEIN MSX"/>
    <property type="match status" value="1"/>
</dbReference>
<dbReference type="PANTHER" id="PTHR24338:SF10">
    <property type="entry name" value="HOMEOBOX PROTEIN MSX-2"/>
    <property type="match status" value="1"/>
</dbReference>
<dbReference type="Pfam" id="PF00046">
    <property type="entry name" value="Homeodomain"/>
    <property type="match status" value="1"/>
</dbReference>
<dbReference type="PRINTS" id="PR00024">
    <property type="entry name" value="HOMEOBOX"/>
</dbReference>
<dbReference type="SMART" id="SM00389">
    <property type="entry name" value="HOX"/>
    <property type="match status" value="1"/>
</dbReference>
<dbReference type="SUPFAM" id="SSF46689">
    <property type="entry name" value="Homeodomain-like"/>
    <property type="match status" value="1"/>
</dbReference>
<dbReference type="PROSITE" id="PS00027">
    <property type="entry name" value="HOMEOBOX_1"/>
    <property type="match status" value="1"/>
</dbReference>
<dbReference type="PROSITE" id="PS50071">
    <property type="entry name" value="HOMEOBOX_2"/>
    <property type="match status" value="1"/>
</dbReference>
<reference key="1">
    <citation type="journal article" date="1992" name="Neuron">
        <title>Regional expression of three homeobox transcripts in the inner ear of zebrafish embryos.</title>
        <authorList>
            <person name="Ekker M."/>
            <person name="Akimenko M.-A."/>
            <person name="Bremiller R."/>
            <person name="Westerfield M."/>
        </authorList>
    </citation>
    <scope>NUCLEOTIDE SEQUENCE [GENOMIC DNA]</scope>
    <source>
        <tissue>Embryo</tissue>
    </source>
</reference>
<protein>
    <recommendedName>
        <fullName>Homeobox protein MSH-D</fullName>
    </recommendedName>
</protein>
<comment type="function">
    <text>Involved in the development of the inner ear.</text>
</comment>
<comment type="subcellular location">
    <subcellularLocation>
        <location>Nucleus</location>
    </subcellularLocation>
</comment>
<comment type="similarity">
    <text evidence="3">Belongs to the Msh homeobox family.</text>
</comment>